<accession>A7H187</accession>
<comment type="function">
    <text evidence="1">Catalyzes the anti-1,4-elimination of the C-3 phosphate and the C-6 proR hydrogen from 5-enolpyruvylshikimate-3-phosphate (EPSP) to yield chorismate, which is the branch point compound that serves as the starting substrate for the three terminal pathways of aromatic amino acid biosynthesis. This reaction introduces a second double bond into the aromatic ring system.</text>
</comment>
<comment type="catalytic activity">
    <reaction evidence="1">
        <text>5-O-(1-carboxyvinyl)-3-phosphoshikimate = chorismate + phosphate</text>
        <dbReference type="Rhea" id="RHEA:21020"/>
        <dbReference type="ChEBI" id="CHEBI:29748"/>
        <dbReference type="ChEBI" id="CHEBI:43474"/>
        <dbReference type="ChEBI" id="CHEBI:57701"/>
        <dbReference type="EC" id="4.2.3.5"/>
    </reaction>
</comment>
<comment type="cofactor">
    <cofactor evidence="1">
        <name>FMNH2</name>
        <dbReference type="ChEBI" id="CHEBI:57618"/>
    </cofactor>
    <text evidence="1">Reduced FMN (FMNH(2)).</text>
</comment>
<comment type="pathway">
    <text evidence="1">Metabolic intermediate biosynthesis; chorismate biosynthesis; chorismate from D-erythrose 4-phosphate and phosphoenolpyruvate: step 7/7.</text>
</comment>
<comment type="subunit">
    <text evidence="1">Homotetramer.</text>
</comment>
<comment type="similarity">
    <text evidence="1">Belongs to the chorismate synthase family.</text>
</comment>
<evidence type="ECO:0000255" key="1">
    <source>
        <dbReference type="HAMAP-Rule" id="MF_00300"/>
    </source>
</evidence>
<organism>
    <name type="scientific">Campylobacter curvus (strain 525.92)</name>
    <dbReference type="NCBI Taxonomy" id="360105"/>
    <lineage>
        <taxon>Bacteria</taxon>
        <taxon>Pseudomonadati</taxon>
        <taxon>Campylobacterota</taxon>
        <taxon>Epsilonproteobacteria</taxon>
        <taxon>Campylobacterales</taxon>
        <taxon>Campylobacteraceae</taxon>
        <taxon>Campylobacter</taxon>
    </lineage>
</organism>
<sequence>MNTFGRKLTLTTFGESHGAAIGGVIDGFPAGVRIDTQFLQSELDRRRPGRNKFATARDEADRAEILSGVFEGVSSGAPIAFVILNQNQKSNDYENLREIFRPGHADFTYFKKFGIRDHRGGGRVSARETAVRVAGGAFAQMLLNEFGVSVKSGVLSVADVVAGEPDFDLASKSEIYSLGNEDAMKSLIMKAREQHDSVGASVLSVVDGAPTGLGEGLYYKLDAVLAAALMGINGVKAVEIGEGVNASRLFGSQNNDEMSEQGFLSNHAGGILGGISTGERIVLKSHFKPTPSIFKAQKTQNLKGECVEFELRGRHDPCIGVRGSVVATAMIRLVICDMMLLNLGSNLANLKKFY</sequence>
<name>AROC_CAMC5</name>
<keyword id="KW-0028">Amino-acid biosynthesis</keyword>
<keyword id="KW-0057">Aromatic amino acid biosynthesis</keyword>
<keyword id="KW-0274">FAD</keyword>
<keyword id="KW-0285">Flavoprotein</keyword>
<keyword id="KW-0288">FMN</keyword>
<keyword id="KW-0456">Lyase</keyword>
<keyword id="KW-0521">NADP</keyword>
<keyword id="KW-1185">Reference proteome</keyword>
<proteinExistence type="inferred from homology"/>
<gene>
    <name evidence="1" type="primary">aroC</name>
    <name type="ordered locus">Ccur92_19250</name>
    <name type="ORF">CCV52592_2064</name>
</gene>
<protein>
    <recommendedName>
        <fullName evidence="1">Chorismate synthase</fullName>
        <shortName evidence="1">CS</shortName>
        <ecNumber evidence="1">4.2.3.5</ecNumber>
    </recommendedName>
    <alternativeName>
        <fullName evidence="1">5-enolpyruvylshikimate-3-phosphate phospholyase</fullName>
    </alternativeName>
</protein>
<dbReference type="EC" id="4.2.3.5" evidence="1"/>
<dbReference type="EMBL" id="CP000767">
    <property type="protein sequence ID" value="EAU00835.1"/>
    <property type="molecule type" value="Genomic_DNA"/>
</dbReference>
<dbReference type="RefSeq" id="WP_009649556.1">
    <property type="nucleotide sequence ID" value="NC_009715.2"/>
</dbReference>
<dbReference type="SMR" id="A7H187"/>
<dbReference type="STRING" id="360105.CCV52592_2064"/>
<dbReference type="KEGG" id="ccv:CCV52592_2064"/>
<dbReference type="HOGENOM" id="CLU_034547_0_2_7"/>
<dbReference type="OrthoDB" id="9771806at2"/>
<dbReference type="UniPathway" id="UPA00053">
    <property type="reaction ID" value="UER00090"/>
</dbReference>
<dbReference type="Proteomes" id="UP000006380">
    <property type="component" value="Chromosome"/>
</dbReference>
<dbReference type="GO" id="GO:0005829">
    <property type="term" value="C:cytosol"/>
    <property type="evidence" value="ECO:0007669"/>
    <property type="project" value="TreeGrafter"/>
</dbReference>
<dbReference type="GO" id="GO:0004107">
    <property type="term" value="F:chorismate synthase activity"/>
    <property type="evidence" value="ECO:0007669"/>
    <property type="project" value="UniProtKB-UniRule"/>
</dbReference>
<dbReference type="GO" id="GO:0010181">
    <property type="term" value="F:FMN binding"/>
    <property type="evidence" value="ECO:0007669"/>
    <property type="project" value="TreeGrafter"/>
</dbReference>
<dbReference type="GO" id="GO:0008652">
    <property type="term" value="P:amino acid biosynthetic process"/>
    <property type="evidence" value="ECO:0007669"/>
    <property type="project" value="UniProtKB-KW"/>
</dbReference>
<dbReference type="GO" id="GO:0009073">
    <property type="term" value="P:aromatic amino acid family biosynthetic process"/>
    <property type="evidence" value="ECO:0007669"/>
    <property type="project" value="UniProtKB-KW"/>
</dbReference>
<dbReference type="GO" id="GO:0009423">
    <property type="term" value="P:chorismate biosynthetic process"/>
    <property type="evidence" value="ECO:0007669"/>
    <property type="project" value="UniProtKB-UniRule"/>
</dbReference>
<dbReference type="CDD" id="cd07304">
    <property type="entry name" value="Chorismate_synthase"/>
    <property type="match status" value="1"/>
</dbReference>
<dbReference type="Gene3D" id="3.60.150.10">
    <property type="entry name" value="Chorismate synthase AroC"/>
    <property type="match status" value="1"/>
</dbReference>
<dbReference type="HAMAP" id="MF_00300">
    <property type="entry name" value="Chorismate_synth"/>
    <property type="match status" value="1"/>
</dbReference>
<dbReference type="InterPro" id="IPR000453">
    <property type="entry name" value="Chorismate_synth"/>
</dbReference>
<dbReference type="InterPro" id="IPR035904">
    <property type="entry name" value="Chorismate_synth_AroC_sf"/>
</dbReference>
<dbReference type="InterPro" id="IPR020541">
    <property type="entry name" value="Chorismate_synthase_CS"/>
</dbReference>
<dbReference type="NCBIfam" id="TIGR00033">
    <property type="entry name" value="aroC"/>
    <property type="match status" value="1"/>
</dbReference>
<dbReference type="NCBIfam" id="NF003793">
    <property type="entry name" value="PRK05382.1"/>
    <property type="match status" value="1"/>
</dbReference>
<dbReference type="PANTHER" id="PTHR21085">
    <property type="entry name" value="CHORISMATE SYNTHASE"/>
    <property type="match status" value="1"/>
</dbReference>
<dbReference type="PANTHER" id="PTHR21085:SF0">
    <property type="entry name" value="CHORISMATE SYNTHASE"/>
    <property type="match status" value="1"/>
</dbReference>
<dbReference type="Pfam" id="PF01264">
    <property type="entry name" value="Chorismate_synt"/>
    <property type="match status" value="1"/>
</dbReference>
<dbReference type="PIRSF" id="PIRSF001456">
    <property type="entry name" value="Chorismate_synth"/>
    <property type="match status" value="1"/>
</dbReference>
<dbReference type="SUPFAM" id="SSF103263">
    <property type="entry name" value="Chorismate synthase, AroC"/>
    <property type="match status" value="1"/>
</dbReference>
<dbReference type="PROSITE" id="PS00787">
    <property type="entry name" value="CHORISMATE_SYNTHASE_1"/>
    <property type="match status" value="1"/>
</dbReference>
<dbReference type="PROSITE" id="PS00788">
    <property type="entry name" value="CHORISMATE_SYNTHASE_2"/>
    <property type="match status" value="1"/>
</dbReference>
<feature type="chain" id="PRO_1000022472" description="Chorismate synthase">
    <location>
        <begin position="1"/>
        <end position="354"/>
    </location>
</feature>
<feature type="binding site" evidence="1">
    <location>
        <position position="46"/>
    </location>
    <ligand>
        <name>NADP(+)</name>
        <dbReference type="ChEBI" id="CHEBI:58349"/>
    </ligand>
</feature>
<feature type="binding site" evidence="1">
    <location>
        <begin position="123"/>
        <end position="125"/>
    </location>
    <ligand>
        <name>FMN</name>
        <dbReference type="ChEBI" id="CHEBI:58210"/>
    </ligand>
</feature>
<feature type="binding site" evidence="1">
    <location>
        <begin position="233"/>
        <end position="234"/>
    </location>
    <ligand>
        <name>FMN</name>
        <dbReference type="ChEBI" id="CHEBI:58210"/>
    </ligand>
</feature>
<feature type="binding site" evidence="1">
    <location>
        <position position="273"/>
    </location>
    <ligand>
        <name>FMN</name>
        <dbReference type="ChEBI" id="CHEBI:58210"/>
    </ligand>
</feature>
<feature type="binding site" evidence="1">
    <location>
        <begin position="288"/>
        <end position="292"/>
    </location>
    <ligand>
        <name>FMN</name>
        <dbReference type="ChEBI" id="CHEBI:58210"/>
    </ligand>
</feature>
<feature type="binding site" evidence="1">
    <location>
        <position position="314"/>
    </location>
    <ligand>
        <name>FMN</name>
        <dbReference type="ChEBI" id="CHEBI:58210"/>
    </ligand>
</feature>
<reference key="1">
    <citation type="submission" date="2007-07" db="EMBL/GenBank/DDBJ databases">
        <title>Genome sequence of Campylobacter curvus 525.92 isolated from human feces.</title>
        <authorList>
            <person name="Fouts D.E."/>
            <person name="Mongodin E.F."/>
            <person name="Puiu D."/>
            <person name="Sebastian Y."/>
            <person name="Miller W.G."/>
            <person name="Mandrell R.E."/>
            <person name="Lastovica A.J."/>
            <person name="Nelson K.E."/>
        </authorList>
    </citation>
    <scope>NUCLEOTIDE SEQUENCE [LARGE SCALE GENOMIC DNA]</scope>
    <source>
        <strain>525.92</strain>
    </source>
</reference>